<sequence>MEEFQGYLELDRYQQHDFLYPLIFREYIYALAHDHGLNRSILLDNVGYDTKYSLLIIKRLISRMYQQNHLIISANDSNQNKFFGYNKNLYSQMMSEGFAVIVEIPFSLRLVSSLEATEIVKSYNLRSIHSIFPFLEDKFPHLNYVSDVLIPYPIHLEILVQTLRYWVKDPSSLHLLRLLLHEYYNWNSLITTKKVIFSKSNPRLFLLLYNSHVCEYESILLFLRNQSSHLRLTSSGIFFERIHFYEKKKYPVEEVFVNDFPAAILWFFKDPFMHYVRYQGKSILSSKDTPLLMNKWKYYLVNLWQCHSYVWSQPGRIYINQLSKHSLDFLGYFSSMRPNLSVVRSQMLENSFLMDNAMKKLDTLVPIIPLIGSLAKVKFCNALGHPISKSTWADSSDFDIIDRFVHICRNLSHYYSGSSRKKSLYRIKYILRLSCVKTLARKHKSTVRTFLKRLGYKLLDEFFTEEEQILSLIFPRASYTLKKFYRGRIWYLDIFCINDLVNHE</sequence>
<dbReference type="EMBL" id="AF288129">
    <property type="protein sequence ID" value="AAL36023.1"/>
    <property type="molecule type" value="Genomic_DNA"/>
</dbReference>
<dbReference type="EMBL" id="AY386949">
    <property type="protein sequence ID" value="AAQ92027.1"/>
    <property type="molecule type" value="Genomic_DNA"/>
</dbReference>
<dbReference type="RefSeq" id="YP_010333567.1">
    <property type="nucleotide sequence ID" value="NC_062344.1"/>
</dbReference>
<dbReference type="GeneID" id="71715601"/>
<dbReference type="GO" id="GO:0009507">
    <property type="term" value="C:chloroplast"/>
    <property type="evidence" value="ECO:0007669"/>
    <property type="project" value="UniProtKB-SubCell"/>
</dbReference>
<dbReference type="GO" id="GO:0003723">
    <property type="term" value="F:RNA binding"/>
    <property type="evidence" value="ECO:0007669"/>
    <property type="project" value="UniProtKB-KW"/>
</dbReference>
<dbReference type="GO" id="GO:0006397">
    <property type="term" value="P:mRNA processing"/>
    <property type="evidence" value="ECO:0007669"/>
    <property type="project" value="UniProtKB-KW"/>
</dbReference>
<dbReference type="GO" id="GO:0008380">
    <property type="term" value="P:RNA splicing"/>
    <property type="evidence" value="ECO:0007669"/>
    <property type="project" value="UniProtKB-UniRule"/>
</dbReference>
<dbReference type="GO" id="GO:0008033">
    <property type="term" value="P:tRNA processing"/>
    <property type="evidence" value="ECO:0007669"/>
    <property type="project" value="UniProtKB-KW"/>
</dbReference>
<dbReference type="HAMAP" id="MF_01390">
    <property type="entry name" value="MatK"/>
    <property type="match status" value="1"/>
</dbReference>
<dbReference type="InterPro" id="IPR024937">
    <property type="entry name" value="Domain_X"/>
</dbReference>
<dbReference type="InterPro" id="IPR002866">
    <property type="entry name" value="Maturase_MatK"/>
</dbReference>
<dbReference type="InterPro" id="IPR024942">
    <property type="entry name" value="Maturase_MatK_N"/>
</dbReference>
<dbReference type="PANTHER" id="PTHR34811">
    <property type="entry name" value="MATURASE K"/>
    <property type="match status" value="1"/>
</dbReference>
<dbReference type="PANTHER" id="PTHR34811:SF1">
    <property type="entry name" value="MATURASE K"/>
    <property type="match status" value="1"/>
</dbReference>
<dbReference type="Pfam" id="PF01348">
    <property type="entry name" value="Intron_maturas2"/>
    <property type="match status" value="1"/>
</dbReference>
<dbReference type="Pfam" id="PF01824">
    <property type="entry name" value="MatK_N"/>
    <property type="match status" value="1"/>
</dbReference>
<reference key="1">
    <citation type="journal article" date="2002" name="Plant Syst. Evol.">
        <title>Phylogenetic relationships in Rosaceae inferred from chloroplast matK and trnL-trnF nucleotide sequence data.</title>
        <authorList>
            <person name="Potter D."/>
            <person name="Gao F."/>
            <person name="Bortiri P.E."/>
            <person name="Oh S.-H."/>
            <person name="Baggett S."/>
        </authorList>
    </citation>
    <scope>NUCLEOTIDE SEQUENCE [GENOMIC DNA]</scope>
</reference>
<reference key="2">
    <citation type="journal article" date="2004" name="Am. J. Bot.">
        <title>A phylogeny of legumes (Leguminosae) based on analysis of the plastid matK gene resolves many well-supported subclades within the family.</title>
        <authorList>
            <person name="Wojciechowski M.F."/>
            <person name="Lavin M."/>
            <person name="Sanderson M.J."/>
        </authorList>
        <dbReference type="AGRICOLA" id="IND43661289"/>
    </citation>
    <scope>NUCLEOTIDE SEQUENCE [GENOMIC DNA]</scope>
</reference>
<keyword id="KW-0150">Chloroplast</keyword>
<keyword id="KW-0507">mRNA processing</keyword>
<keyword id="KW-0934">Plastid</keyword>
<keyword id="KW-0694">RNA-binding</keyword>
<keyword id="KW-0819">tRNA processing</keyword>
<accession>Q8WJN0</accession>
<gene>
    <name evidence="1" type="primary">matK</name>
</gene>
<organism>
    <name type="scientific">Vauquelinia californica</name>
    <name type="common">Arizona rosewood</name>
    <name type="synonym">Spiraea californica</name>
    <dbReference type="NCBI Taxonomy" id="36600"/>
    <lineage>
        <taxon>Eukaryota</taxon>
        <taxon>Viridiplantae</taxon>
        <taxon>Streptophyta</taxon>
        <taxon>Embryophyta</taxon>
        <taxon>Tracheophyta</taxon>
        <taxon>Spermatophyta</taxon>
        <taxon>Magnoliopsida</taxon>
        <taxon>eudicotyledons</taxon>
        <taxon>Gunneridae</taxon>
        <taxon>Pentapetalae</taxon>
        <taxon>rosids</taxon>
        <taxon>fabids</taxon>
        <taxon>Rosales</taxon>
        <taxon>Rosaceae</taxon>
        <taxon>Amygdaloideae</taxon>
        <taxon>Maleae</taxon>
        <taxon>Vauquelinia</taxon>
    </lineage>
</organism>
<protein>
    <recommendedName>
        <fullName evidence="1">Maturase K</fullName>
    </recommendedName>
    <alternativeName>
        <fullName evidence="1">Intron maturase</fullName>
    </alternativeName>
</protein>
<geneLocation type="chloroplast"/>
<evidence type="ECO:0000255" key="1">
    <source>
        <dbReference type="HAMAP-Rule" id="MF_01390"/>
    </source>
</evidence>
<feature type="chain" id="PRO_0000143778" description="Maturase K">
    <location>
        <begin position="1"/>
        <end position="504"/>
    </location>
</feature>
<comment type="function">
    <text evidence="1">Usually encoded in the trnK tRNA gene intron. Probably assists in splicing its own and other chloroplast group II introns.</text>
</comment>
<comment type="subcellular location">
    <subcellularLocation>
        <location>Plastid</location>
        <location>Chloroplast</location>
    </subcellularLocation>
</comment>
<comment type="similarity">
    <text evidence="1">Belongs to the intron maturase 2 family. MatK subfamily.</text>
</comment>
<name>MATK_VAUCA</name>
<proteinExistence type="inferred from homology"/>